<dbReference type="EMBL" id="AC011000">
    <property type="protein sequence ID" value="AAF75803.1"/>
    <property type="status" value="ALT_INIT"/>
    <property type="molecule type" value="Genomic_DNA"/>
</dbReference>
<dbReference type="EMBL" id="CP002684">
    <property type="protein sequence ID" value="AEE34023.1"/>
    <property type="molecule type" value="Genomic_DNA"/>
</dbReference>
<dbReference type="EMBL" id="AY056104">
    <property type="status" value="NOT_ANNOTATED_CDS"/>
    <property type="molecule type" value="mRNA"/>
</dbReference>
<dbReference type="PIR" id="H96653">
    <property type="entry name" value="H96653"/>
</dbReference>
<dbReference type="RefSeq" id="NP_176481.2">
    <property type="nucleotide sequence ID" value="NM_104971.3"/>
</dbReference>
<dbReference type="SMR" id="Q9LQ14"/>
<dbReference type="FunCoup" id="Q9LQ14">
    <property type="interactions" value="2"/>
</dbReference>
<dbReference type="STRING" id="3702.Q9LQ14"/>
<dbReference type="iPTMnet" id="Q9LQ14"/>
<dbReference type="PaxDb" id="3702-AT1G62930.1"/>
<dbReference type="ProteomicsDB" id="236594"/>
<dbReference type="EnsemblPlants" id="AT1G62930.1">
    <property type="protein sequence ID" value="AT1G62930.1"/>
    <property type="gene ID" value="AT1G62930"/>
</dbReference>
<dbReference type="GeneID" id="842594"/>
<dbReference type="Gramene" id="AT1G62930.1">
    <property type="protein sequence ID" value="AT1G62930.1"/>
    <property type="gene ID" value="AT1G62930"/>
</dbReference>
<dbReference type="KEGG" id="ath:AT1G62930"/>
<dbReference type="Araport" id="AT1G62930"/>
<dbReference type="TAIR" id="AT1G62930">
    <property type="gene designation" value="RPF3"/>
</dbReference>
<dbReference type="eggNOG" id="KOG4197">
    <property type="taxonomic scope" value="Eukaryota"/>
</dbReference>
<dbReference type="HOGENOM" id="CLU_002706_49_0_1"/>
<dbReference type="InParanoid" id="Q9LQ14"/>
<dbReference type="OMA" id="DAKKMFH"/>
<dbReference type="PhylomeDB" id="Q9LQ14"/>
<dbReference type="PRO" id="PR:Q9LQ14"/>
<dbReference type="Proteomes" id="UP000006548">
    <property type="component" value="Chromosome 1"/>
</dbReference>
<dbReference type="ExpressionAtlas" id="Q9LQ14">
    <property type="expression patterns" value="baseline and differential"/>
</dbReference>
<dbReference type="GO" id="GO:0009507">
    <property type="term" value="C:chloroplast"/>
    <property type="evidence" value="ECO:0007669"/>
    <property type="project" value="UniProtKB-SubCell"/>
</dbReference>
<dbReference type="GO" id="GO:0005739">
    <property type="term" value="C:mitochondrion"/>
    <property type="evidence" value="ECO:0000314"/>
    <property type="project" value="TAIR"/>
</dbReference>
<dbReference type="GO" id="GO:0006397">
    <property type="term" value="P:mRNA processing"/>
    <property type="evidence" value="ECO:0000315"/>
    <property type="project" value="TAIR"/>
</dbReference>
<dbReference type="FunFam" id="1.25.40.10:FF:003300">
    <property type="entry name" value="Pentatricopeptide repeat-containing protein At1g62590"/>
    <property type="match status" value="1"/>
</dbReference>
<dbReference type="FunFam" id="1.25.40.10:FF:002115">
    <property type="entry name" value="Pentatricopeptide repeat-containing protein At1g62720"/>
    <property type="match status" value="1"/>
</dbReference>
<dbReference type="FunFam" id="1.25.40.10:FF:000558">
    <property type="entry name" value="Pentatricopeptide repeat-containing protein At5g39710"/>
    <property type="match status" value="1"/>
</dbReference>
<dbReference type="Gene3D" id="1.25.40.10">
    <property type="entry name" value="Tetratricopeptide repeat domain"/>
    <property type="match status" value="7"/>
</dbReference>
<dbReference type="InterPro" id="IPR002885">
    <property type="entry name" value="Pentatricopeptide_rpt"/>
</dbReference>
<dbReference type="InterPro" id="IPR050667">
    <property type="entry name" value="PPR-containing_protein"/>
</dbReference>
<dbReference type="InterPro" id="IPR011990">
    <property type="entry name" value="TPR-like_helical_dom_sf"/>
</dbReference>
<dbReference type="NCBIfam" id="TIGR00756">
    <property type="entry name" value="PPR"/>
    <property type="match status" value="14"/>
</dbReference>
<dbReference type="PANTHER" id="PTHR47939">
    <property type="entry name" value="MEMBRANE-ASSOCIATED SALT-INDUCIBLE PROTEIN-LIKE"/>
    <property type="match status" value="1"/>
</dbReference>
<dbReference type="PANTHER" id="PTHR47939:SF13">
    <property type="entry name" value="OS03G0201400 PROTEIN"/>
    <property type="match status" value="1"/>
</dbReference>
<dbReference type="Pfam" id="PF12854">
    <property type="entry name" value="PPR_1"/>
    <property type="match status" value="2"/>
</dbReference>
<dbReference type="Pfam" id="PF13041">
    <property type="entry name" value="PPR_2"/>
    <property type="match status" value="6"/>
</dbReference>
<dbReference type="SUPFAM" id="SSF48452">
    <property type="entry name" value="TPR-like"/>
    <property type="match status" value="2"/>
</dbReference>
<dbReference type="PROSITE" id="PS51375">
    <property type="entry name" value="PPR"/>
    <property type="match status" value="15"/>
</dbReference>
<organism>
    <name type="scientific">Arabidopsis thaliana</name>
    <name type="common">Mouse-ear cress</name>
    <dbReference type="NCBI Taxonomy" id="3702"/>
    <lineage>
        <taxon>Eukaryota</taxon>
        <taxon>Viridiplantae</taxon>
        <taxon>Streptophyta</taxon>
        <taxon>Embryophyta</taxon>
        <taxon>Tracheophyta</taxon>
        <taxon>Spermatophyta</taxon>
        <taxon>Magnoliopsida</taxon>
        <taxon>eudicotyledons</taxon>
        <taxon>Gunneridae</taxon>
        <taxon>Pentapetalae</taxon>
        <taxon>rosids</taxon>
        <taxon>malvids</taxon>
        <taxon>Brassicales</taxon>
        <taxon>Brassicaceae</taxon>
        <taxon>Camelineae</taxon>
        <taxon>Arabidopsis</taxon>
    </lineage>
</organism>
<feature type="transit peptide" description="Chloroplast" evidence="1">
    <location>
        <begin position="1"/>
        <end position="41"/>
    </location>
</feature>
<feature type="chain" id="PRO_0000342837" description="Pentatricopeptide repeat-containing protein At1g62930, chloroplastic">
    <location>
        <begin position="42"/>
        <end position="629"/>
    </location>
</feature>
<feature type="repeat" description="PPR 1">
    <location>
        <begin position="79"/>
        <end position="113"/>
    </location>
</feature>
<feature type="repeat" description="PPR 2">
    <location>
        <begin position="114"/>
        <end position="148"/>
    </location>
</feature>
<feature type="repeat" description="PPR 3">
    <location>
        <begin position="149"/>
        <end position="183"/>
    </location>
</feature>
<feature type="repeat" description="PPR 4">
    <location>
        <begin position="184"/>
        <end position="218"/>
    </location>
</feature>
<feature type="repeat" description="PPR 5">
    <location>
        <begin position="219"/>
        <end position="253"/>
    </location>
</feature>
<feature type="repeat" description="PPR 6">
    <location>
        <begin position="254"/>
        <end position="288"/>
    </location>
</feature>
<feature type="repeat" description="PPR 7">
    <location>
        <begin position="289"/>
        <end position="323"/>
    </location>
</feature>
<feature type="repeat" description="PPR 8">
    <location>
        <begin position="324"/>
        <end position="358"/>
    </location>
</feature>
<feature type="repeat" description="PPR 9">
    <location>
        <begin position="359"/>
        <end position="393"/>
    </location>
</feature>
<feature type="repeat" description="PPR 10">
    <location>
        <begin position="394"/>
        <end position="428"/>
    </location>
</feature>
<feature type="repeat" description="PPR 11">
    <location>
        <begin position="429"/>
        <end position="463"/>
    </location>
</feature>
<feature type="repeat" description="PPR 12">
    <location>
        <begin position="464"/>
        <end position="498"/>
    </location>
</feature>
<feature type="repeat" description="PPR 13">
    <location>
        <begin position="499"/>
        <end position="533"/>
    </location>
</feature>
<feature type="repeat" description="PPR 14">
    <location>
        <begin position="534"/>
        <end position="568"/>
    </location>
</feature>
<feature type="repeat" description="PPR 15">
    <location>
        <begin position="569"/>
        <end position="603"/>
    </location>
</feature>
<proteinExistence type="evidence at transcript level"/>
<comment type="subcellular location">
    <subcellularLocation>
        <location evidence="2">Plastid</location>
        <location evidence="2">Chloroplast</location>
    </subcellularLocation>
</comment>
<comment type="similarity">
    <text evidence="2">Belongs to the PPR family. P subfamily.</text>
</comment>
<comment type="sequence caution" evidence="2">
    <conflict type="erroneous initiation">
        <sequence resource="EMBL-CDS" id="AAF75803"/>
    </conflict>
</comment>
<comment type="online information" name="Pentatricopeptide repeat proteins">
    <link uri="https://ppr.plantenergy.uwa.edu.au"/>
</comment>
<gene>
    <name type="ordered locus">At1g62930</name>
    <name type="ORF">F16P17.7</name>
</gene>
<keyword id="KW-0150">Chloroplast</keyword>
<keyword id="KW-0934">Plastid</keyword>
<keyword id="KW-1185">Reference proteome</keyword>
<keyword id="KW-0677">Repeat</keyword>
<keyword id="KW-0809">Transit peptide</keyword>
<evidence type="ECO:0000255" key="1"/>
<evidence type="ECO:0000305" key="2"/>
<accession>Q9LQ14</accession>
<protein>
    <recommendedName>
        <fullName>Pentatricopeptide repeat-containing protein At1g62930, chloroplastic</fullName>
    </recommendedName>
</protein>
<name>PPR96_ARATH</name>
<reference key="1">
    <citation type="journal article" date="2000" name="Nature">
        <title>Sequence and analysis of chromosome 1 of the plant Arabidopsis thaliana.</title>
        <authorList>
            <person name="Theologis A."/>
            <person name="Ecker J.R."/>
            <person name="Palm C.J."/>
            <person name="Federspiel N.A."/>
            <person name="Kaul S."/>
            <person name="White O."/>
            <person name="Alonso J."/>
            <person name="Altafi H."/>
            <person name="Araujo R."/>
            <person name="Bowman C.L."/>
            <person name="Brooks S.Y."/>
            <person name="Buehler E."/>
            <person name="Chan A."/>
            <person name="Chao Q."/>
            <person name="Chen H."/>
            <person name="Cheuk R.F."/>
            <person name="Chin C.W."/>
            <person name="Chung M.K."/>
            <person name="Conn L."/>
            <person name="Conway A.B."/>
            <person name="Conway A.R."/>
            <person name="Creasy T.H."/>
            <person name="Dewar K."/>
            <person name="Dunn P."/>
            <person name="Etgu P."/>
            <person name="Feldblyum T.V."/>
            <person name="Feng J.-D."/>
            <person name="Fong B."/>
            <person name="Fujii C.Y."/>
            <person name="Gill J.E."/>
            <person name="Goldsmith A.D."/>
            <person name="Haas B."/>
            <person name="Hansen N.F."/>
            <person name="Hughes B."/>
            <person name="Huizar L."/>
            <person name="Hunter J.L."/>
            <person name="Jenkins J."/>
            <person name="Johnson-Hopson C."/>
            <person name="Khan S."/>
            <person name="Khaykin E."/>
            <person name="Kim C.J."/>
            <person name="Koo H.L."/>
            <person name="Kremenetskaia I."/>
            <person name="Kurtz D.B."/>
            <person name="Kwan A."/>
            <person name="Lam B."/>
            <person name="Langin-Hooper S."/>
            <person name="Lee A."/>
            <person name="Lee J.M."/>
            <person name="Lenz C.A."/>
            <person name="Li J.H."/>
            <person name="Li Y.-P."/>
            <person name="Lin X."/>
            <person name="Liu S.X."/>
            <person name="Liu Z.A."/>
            <person name="Luros J.S."/>
            <person name="Maiti R."/>
            <person name="Marziali A."/>
            <person name="Militscher J."/>
            <person name="Miranda M."/>
            <person name="Nguyen M."/>
            <person name="Nierman W.C."/>
            <person name="Osborne B.I."/>
            <person name="Pai G."/>
            <person name="Peterson J."/>
            <person name="Pham P.K."/>
            <person name="Rizzo M."/>
            <person name="Rooney T."/>
            <person name="Rowley D."/>
            <person name="Sakano H."/>
            <person name="Salzberg S.L."/>
            <person name="Schwartz J.R."/>
            <person name="Shinn P."/>
            <person name="Southwick A.M."/>
            <person name="Sun H."/>
            <person name="Tallon L.J."/>
            <person name="Tambunga G."/>
            <person name="Toriumi M.J."/>
            <person name="Town C.D."/>
            <person name="Utterback T."/>
            <person name="Van Aken S."/>
            <person name="Vaysberg M."/>
            <person name="Vysotskaia V.S."/>
            <person name="Walker M."/>
            <person name="Wu D."/>
            <person name="Yu G."/>
            <person name="Fraser C.M."/>
            <person name="Venter J.C."/>
            <person name="Davis R.W."/>
        </authorList>
    </citation>
    <scope>NUCLEOTIDE SEQUENCE [LARGE SCALE GENOMIC DNA]</scope>
    <source>
        <strain>cv. Columbia</strain>
    </source>
</reference>
<reference key="2">
    <citation type="journal article" date="2017" name="Plant J.">
        <title>Araport11: a complete reannotation of the Arabidopsis thaliana reference genome.</title>
        <authorList>
            <person name="Cheng C.Y."/>
            <person name="Krishnakumar V."/>
            <person name="Chan A.P."/>
            <person name="Thibaud-Nissen F."/>
            <person name="Schobel S."/>
            <person name="Town C.D."/>
        </authorList>
    </citation>
    <scope>GENOME REANNOTATION</scope>
    <source>
        <strain>cv. Columbia</strain>
    </source>
</reference>
<reference key="3">
    <citation type="journal article" date="2003" name="Science">
        <title>Empirical analysis of transcriptional activity in the Arabidopsis genome.</title>
        <authorList>
            <person name="Yamada K."/>
            <person name="Lim J."/>
            <person name="Dale J.M."/>
            <person name="Chen H."/>
            <person name="Shinn P."/>
            <person name="Palm C.J."/>
            <person name="Southwick A.M."/>
            <person name="Wu H.C."/>
            <person name="Kim C.J."/>
            <person name="Nguyen M."/>
            <person name="Pham P.K."/>
            <person name="Cheuk R.F."/>
            <person name="Karlin-Newmann G."/>
            <person name="Liu S.X."/>
            <person name="Lam B."/>
            <person name="Sakano H."/>
            <person name="Wu T."/>
            <person name="Yu G."/>
            <person name="Miranda M."/>
            <person name="Quach H.L."/>
            <person name="Tripp M."/>
            <person name="Chang C.H."/>
            <person name="Lee J.M."/>
            <person name="Toriumi M.J."/>
            <person name="Chan M.M."/>
            <person name="Tang C.C."/>
            <person name="Onodera C.S."/>
            <person name="Deng J.M."/>
            <person name="Akiyama K."/>
            <person name="Ansari Y."/>
            <person name="Arakawa T."/>
            <person name="Banh J."/>
            <person name="Banno F."/>
            <person name="Bowser L."/>
            <person name="Brooks S.Y."/>
            <person name="Carninci P."/>
            <person name="Chao Q."/>
            <person name="Choy N."/>
            <person name="Enju A."/>
            <person name="Goldsmith A.D."/>
            <person name="Gurjal M."/>
            <person name="Hansen N.F."/>
            <person name="Hayashizaki Y."/>
            <person name="Johnson-Hopson C."/>
            <person name="Hsuan V.W."/>
            <person name="Iida K."/>
            <person name="Karnes M."/>
            <person name="Khan S."/>
            <person name="Koesema E."/>
            <person name="Ishida J."/>
            <person name="Jiang P.X."/>
            <person name="Jones T."/>
            <person name="Kawai J."/>
            <person name="Kamiya A."/>
            <person name="Meyers C."/>
            <person name="Nakajima M."/>
            <person name="Narusaka M."/>
            <person name="Seki M."/>
            <person name="Sakurai T."/>
            <person name="Satou M."/>
            <person name="Tamse R."/>
            <person name="Vaysberg M."/>
            <person name="Wallender E.K."/>
            <person name="Wong C."/>
            <person name="Yamamura Y."/>
            <person name="Yuan S."/>
            <person name="Shinozaki K."/>
            <person name="Davis R.W."/>
            <person name="Theologis A."/>
            <person name="Ecker J.R."/>
        </authorList>
    </citation>
    <scope>NUCLEOTIDE SEQUENCE [LARGE SCALE MRNA] OF 8-558</scope>
    <source>
        <strain>cv. Columbia</strain>
    </source>
</reference>
<reference key="4">
    <citation type="journal article" date="2004" name="Plant Cell">
        <title>Genome-wide analysis of Arabidopsis pentatricopeptide repeat proteins reveals their essential role in organelle biogenesis.</title>
        <authorList>
            <person name="Lurin C."/>
            <person name="Andres C."/>
            <person name="Aubourg S."/>
            <person name="Bellaoui M."/>
            <person name="Bitton F."/>
            <person name="Bruyere C."/>
            <person name="Caboche M."/>
            <person name="Debast C."/>
            <person name="Gualberto J."/>
            <person name="Hoffmann B."/>
            <person name="Lecharny A."/>
            <person name="Le Ret M."/>
            <person name="Martin-Magniette M.-L."/>
            <person name="Mireau H."/>
            <person name="Peeters N."/>
            <person name="Renou J.-P."/>
            <person name="Szurek B."/>
            <person name="Taconnat L."/>
            <person name="Small I."/>
        </authorList>
    </citation>
    <scope>GENE FAMILY</scope>
</reference>
<sequence length="629" mass="70923">MTSCVHLGIVASQSKKMSLAKRFAQLRKASPLFSLRGVYFSAASYDYREKLSRNVLLDLKLDDAVDLFGEMVQSRPLPSIVEFNKLLSAIAKMNKFDLVISLGERMQNLRISYDLYSYNILINCFCRRSQLPLALAVLGKMMKLGYEPDIVTLSSLLNGYCHGKRISEAVALVDQMFVMEYQPNTVTFNTLIHGLFLHNKASEAVALIDRMVARGCQPDLFTYGTVVNGLCKRGDIDLALSLLKKMEKGKIEADVVIYTTIIDALCNYKNVNDALNLFTEMDNKGIRPNVVTYNSLIRCLCNYGRWSDASRLLSDMIERKINPNVVTFSALIDAFVKEGKLVEAEKLYDEMIKRSIDPDIFTYSSLINGFCMHDRLDEAKHMFELMISKDCFPNVVTYNTLIKGFCKAKRVEEGMELFREMSQRGLVGNTVTYNTLIQGLFQAGDCDMAQKIFKKMVSDGVPPDIITYSILLDGLCKYGKLEKALVVFEYLQKSKMEPDIYTYNIMIEGMCKAGKVEDGWDLFCSLSLKGVKPNVIIYTTMISGFCRKGLKEEADALFREMKEDGTLPNSGTYNTLIRARLRDGDKAASAELIKEMRSCGFVGDASTISMVINMLHDGRLEKSYLEMLS</sequence>